<comment type="function">
    <text evidence="1">Produces ATP from ADP in the presence of a proton gradient across the membrane.</text>
</comment>
<comment type="subunit">
    <text>F-type ATPases have 2 components, CF(1) - the catalytic core - and CF(0) - the membrane proton channel. CF(1) has five subunits: alpha(3), beta(3), gamma(1), delta(1), epsilon(1). CF(0) has three main subunits: a, b and c.</text>
</comment>
<comment type="subcellular location">
    <subcellularLocation>
        <location evidence="1">Cell inner membrane</location>
        <topology evidence="1">Peripheral membrane protein</topology>
    </subcellularLocation>
</comment>
<comment type="similarity">
    <text evidence="2">Belongs to the ATPase epsilon chain family.</text>
</comment>
<reference key="1">
    <citation type="journal article" date="2001" name="Proc. Natl. Acad. Sci. U.S.A.">
        <title>Complete genome sequence of Caulobacter crescentus.</title>
        <authorList>
            <person name="Nierman W.C."/>
            <person name="Feldblyum T.V."/>
            <person name="Laub M.T."/>
            <person name="Paulsen I.T."/>
            <person name="Nelson K.E."/>
            <person name="Eisen J.A."/>
            <person name="Heidelberg J.F."/>
            <person name="Alley M.R.K."/>
            <person name="Ohta N."/>
            <person name="Maddock J.R."/>
            <person name="Potocka I."/>
            <person name="Nelson W.C."/>
            <person name="Newton A."/>
            <person name="Stephens C."/>
            <person name="Phadke N.D."/>
            <person name="Ely B."/>
            <person name="DeBoy R.T."/>
            <person name="Dodson R.J."/>
            <person name="Durkin A.S."/>
            <person name="Gwinn M.L."/>
            <person name="Haft D.H."/>
            <person name="Kolonay J.F."/>
            <person name="Smit J."/>
            <person name="Craven M.B."/>
            <person name="Khouri H.M."/>
            <person name="Shetty J."/>
            <person name="Berry K.J."/>
            <person name="Utterback T.R."/>
            <person name="Tran K."/>
            <person name="Wolf A.M."/>
            <person name="Vamathevan J.J."/>
            <person name="Ermolaeva M.D."/>
            <person name="White O."/>
            <person name="Salzberg S.L."/>
            <person name="Venter J.C."/>
            <person name="Shapiro L."/>
            <person name="Fraser C.M."/>
        </authorList>
    </citation>
    <scope>NUCLEOTIDE SEQUENCE [LARGE SCALE GENOMIC DNA]</scope>
    <source>
        <strain>ATCC 19089 / CIP 103742 / CB 15</strain>
    </source>
</reference>
<protein>
    <recommendedName>
        <fullName>ATP synthase epsilon chain</fullName>
    </recommendedName>
    <alternativeName>
        <fullName>ATP synthase F1 sector epsilon subunit</fullName>
    </alternativeName>
    <alternativeName>
        <fullName>F-ATPase epsilon subunit</fullName>
    </alternativeName>
</protein>
<name>ATPE_CAUVC</name>
<organism>
    <name type="scientific">Caulobacter vibrioides (strain ATCC 19089 / CIP 103742 / CB 15)</name>
    <name type="common">Caulobacter crescentus</name>
    <dbReference type="NCBI Taxonomy" id="190650"/>
    <lineage>
        <taxon>Bacteria</taxon>
        <taxon>Pseudomonadati</taxon>
        <taxon>Pseudomonadota</taxon>
        <taxon>Alphaproteobacteria</taxon>
        <taxon>Caulobacterales</taxon>
        <taxon>Caulobacteraceae</taxon>
        <taxon>Caulobacter</taxon>
    </lineage>
</organism>
<evidence type="ECO:0000250" key="1"/>
<evidence type="ECO:0000305" key="2"/>
<feature type="chain" id="PRO_0000188118" description="ATP synthase epsilon chain">
    <location>
        <begin position="1"/>
        <end position="86"/>
    </location>
</feature>
<sequence>MAKLHFSLVAPERELFSGEVDMVQAPGAEGDFGVLANHAPFMTTLREGKVTVKDGATTKVFDIQGGFADVGPEGLTILAEHAVEAA</sequence>
<keyword id="KW-0066">ATP synthesis</keyword>
<keyword id="KW-0997">Cell inner membrane</keyword>
<keyword id="KW-1003">Cell membrane</keyword>
<keyword id="KW-0139">CF(1)</keyword>
<keyword id="KW-0375">Hydrogen ion transport</keyword>
<keyword id="KW-0406">Ion transport</keyword>
<keyword id="KW-0472">Membrane</keyword>
<keyword id="KW-1185">Reference proteome</keyword>
<keyword id="KW-0813">Transport</keyword>
<accession>Q9A2W1</accession>
<gene>
    <name type="primary">atpC</name>
    <name type="ordered locus">CC_3445</name>
</gene>
<dbReference type="EMBL" id="AE005673">
    <property type="protein sequence ID" value="AAK25407.1"/>
    <property type="molecule type" value="Genomic_DNA"/>
</dbReference>
<dbReference type="PIR" id="C87676">
    <property type="entry name" value="C87676"/>
</dbReference>
<dbReference type="RefSeq" id="NP_422239.1">
    <property type="nucleotide sequence ID" value="NC_002696.2"/>
</dbReference>
<dbReference type="RefSeq" id="WP_010921274.1">
    <property type="nucleotide sequence ID" value="NC_002696.2"/>
</dbReference>
<dbReference type="SMR" id="Q9A2W1"/>
<dbReference type="STRING" id="190650.CC_3445"/>
<dbReference type="EnsemblBacteria" id="AAK25407">
    <property type="protein sequence ID" value="AAK25407"/>
    <property type="gene ID" value="CC_3445"/>
</dbReference>
<dbReference type="KEGG" id="ccr:CC_3445"/>
<dbReference type="PATRIC" id="fig|190650.5.peg.3455"/>
<dbReference type="eggNOG" id="COG0355">
    <property type="taxonomic scope" value="Bacteria"/>
</dbReference>
<dbReference type="HOGENOM" id="CLU_084338_4_2_5"/>
<dbReference type="BioCyc" id="CAULO:CC3445-MONOMER"/>
<dbReference type="Proteomes" id="UP000001816">
    <property type="component" value="Chromosome"/>
</dbReference>
<dbReference type="GO" id="GO:0005886">
    <property type="term" value="C:plasma membrane"/>
    <property type="evidence" value="ECO:0007669"/>
    <property type="project" value="UniProtKB-SubCell"/>
</dbReference>
<dbReference type="GO" id="GO:0045259">
    <property type="term" value="C:proton-transporting ATP synthase complex"/>
    <property type="evidence" value="ECO:0007669"/>
    <property type="project" value="UniProtKB-KW"/>
</dbReference>
<dbReference type="GO" id="GO:0005524">
    <property type="term" value="F:ATP binding"/>
    <property type="evidence" value="ECO:0007669"/>
    <property type="project" value="UniProtKB-UniRule"/>
</dbReference>
<dbReference type="GO" id="GO:0046933">
    <property type="term" value="F:proton-transporting ATP synthase activity, rotational mechanism"/>
    <property type="evidence" value="ECO:0007669"/>
    <property type="project" value="UniProtKB-UniRule"/>
</dbReference>
<dbReference type="CDD" id="cd12152">
    <property type="entry name" value="F1-ATPase_delta"/>
    <property type="match status" value="1"/>
</dbReference>
<dbReference type="Gene3D" id="2.60.15.10">
    <property type="entry name" value="F0F1 ATP synthase delta/epsilon subunit, N-terminal"/>
    <property type="match status" value="1"/>
</dbReference>
<dbReference type="HAMAP" id="MF_00530">
    <property type="entry name" value="ATP_synth_epsil_bac"/>
    <property type="match status" value="1"/>
</dbReference>
<dbReference type="InterPro" id="IPR001469">
    <property type="entry name" value="ATP_synth_F1_dsu/esu"/>
</dbReference>
<dbReference type="InterPro" id="IPR020546">
    <property type="entry name" value="ATP_synth_F1_dsu/esu_N"/>
</dbReference>
<dbReference type="InterPro" id="IPR036771">
    <property type="entry name" value="ATPsynth_dsu/esu_N"/>
</dbReference>
<dbReference type="NCBIfam" id="TIGR01216">
    <property type="entry name" value="ATP_synt_epsi"/>
    <property type="match status" value="1"/>
</dbReference>
<dbReference type="NCBIfam" id="NF009983">
    <property type="entry name" value="PRK13449.1"/>
    <property type="match status" value="1"/>
</dbReference>
<dbReference type="PANTHER" id="PTHR13822">
    <property type="entry name" value="ATP SYNTHASE DELTA/EPSILON CHAIN"/>
    <property type="match status" value="1"/>
</dbReference>
<dbReference type="PANTHER" id="PTHR13822:SF10">
    <property type="entry name" value="ATP SYNTHASE EPSILON CHAIN, CHLOROPLASTIC"/>
    <property type="match status" value="1"/>
</dbReference>
<dbReference type="Pfam" id="PF02823">
    <property type="entry name" value="ATP-synt_DE_N"/>
    <property type="match status" value="1"/>
</dbReference>
<dbReference type="SUPFAM" id="SSF51344">
    <property type="entry name" value="Epsilon subunit of F1F0-ATP synthase N-terminal domain"/>
    <property type="match status" value="1"/>
</dbReference>
<proteinExistence type="inferred from homology"/>